<accession>P11193</accession>
<accession>Q05334</accession>
<accession>Q86202</accession>
<reference key="1">
    <citation type="journal article" date="1988" name="J. Virol.">
        <title>Sequence of the fourth gene of human rotaviruses recovered from asymptomatic or symptomatic infections.</title>
        <authorList>
            <person name="Gorziglia M."/>
            <person name="Green K.Y."/>
            <person name="Nishikawa K."/>
            <person name="Taniguchi K."/>
            <person name="Jones R.W."/>
            <person name="Kapikian A.Z."/>
            <person name="Chanock R.M."/>
        </authorList>
    </citation>
    <scope>NUCLEOTIDE SEQUENCE</scope>
</reference>
<reference key="2">
    <citation type="journal article" date="1993" name="Arch. Virol.">
        <title>Alterations in the sequence of the gene 4 from a human rotavirus after multiple passages in HepG2 liver cells.</title>
        <authorList>
            <person name="Kitamoto N."/>
            <person name="Mattion N.M."/>
            <person name="Estes M.K."/>
        </authorList>
    </citation>
    <scope>NUCLEOTIDE SEQUENCE [GENOMIC RNA]</scope>
</reference>
<reference key="3">
    <citation type="journal article" date="1995" name="Virology">
        <title>Identification of two independent neutralization domains on the VP4 trypsin cleavage products VP5* and VP8* of human rotavirus ST3.</title>
        <authorList>
            <person name="Padilla-Noriega L."/>
            <person name="Dunn S.J."/>
            <person name="Lopez S."/>
            <person name="Greenberg H.B."/>
            <person name="Arias C.F."/>
        </authorList>
    </citation>
    <scope>NUCLEOTIDE SEQUENCE [GENOMIC RNA]</scope>
</reference>
<reference key="4">
    <citation type="journal article" date="1986" name="Proc. Natl. Acad. Sci. U.S.A.">
        <title>Conservation of amino acid sequence of VP8 and cleavage region of 84-kDa outer capsid protein among rotaviruses recovered from asymptomatic neonatal infection.</title>
        <authorList>
            <person name="Gorziglia M."/>
            <person name="Hoshino Y."/>
            <person name="Buckler-White A."/>
            <person name="Blumentals I."/>
            <person name="Glass R."/>
            <person name="Flores J."/>
            <person name="Kapikian A.Z."/>
            <person name="Chanock R.M."/>
        </authorList>
    </citation>
    <scope>NUCLEOTIDE SEQUENCE [GENOMIC RNA] OF 1-280</scope>
</reference>
<reference key="5">
    <citation type="journal article" date="2005" name="J. Gen. Virol.">
        <title>Rotaviruses interact with alpha4beta7 and alpha4beta1 integrins by binding the same integrin domains as natural ligands.</title>
        <authorList>
            <person name="Graham K.L."/>
            <person name="Fleming F.E."/>
            <person name="Halasz P."/>
            <person name="Hewish M.J."/>
            <person name="Nagesha H.S."/>
            <person name="Holmes I.H."/>
            <person name="Takada Y."/>
            <person name="Coulson B.S."/>
        </authorList>
    </citation>
    <scope>INTERACTION WITH HUMAN INTEGRIN HETERODIMER ITGA4/ITGB1 (OUTER CAPSID VP5*)</scope>
    <scope>INTERACTION WITH HUMAN INTEGRIN HETERODIMER ITGA4/ITGB7 (OUTER CAPSID PROTEIN VP5*)</scope>
</reference>
<reference key="6">
    <citation type="journal article" date="2006" name="J. Gen. Virol.">
        <title>Rotavirus spike protein VP5* binds alpha2beta1 integrin on the cell surface and competes with virus for cell binding and infectivity.</title>
        <authorList>
            <person name="Graham K.L."/>
            <person name="Takada Y."/>
            <person name="Coulson B.S."/>
        </authorList>
    </citation>
    <scope>INTERACTION WITH HUMAN INTEGRIN HETERODIMER ITGA2/ITGB1 (OUTER CAPSID PROTEIN VP5*)</scope>
</reference>
<reference key="7">
    <citation type="journal article" date="2006" name="Glycoconj. J.">
        <title>Role of sialic acids in rotavirus infection.</title>
        <authorList>
            <person name="Isa P."/>
            <person name="Arias C.F."/>
            <person name="Lopez S."/>
        </authorList>
    </citation>
    <scope>REVIEW</scope>
</reference>
<reference key="8">
    <citation type="journal article" date="2014" name="J. Virol.">
        <title>Relative roles of GM1 ganglioside, N-acylneuraminic acids, and alpha2beta1 integrin in mediating rotavirus infection.</title>
        <authorList>
            <person name="Fleming F.E."/>
            <person name="Boehm R."/>
            <person name="Dang V.T."/>
            <person name="Holloway G."/>
            <person name="Haselhorst T."/>
            <person name="Madge P.D."/>
            <person name="Deveryshetty J."/>
            <person name="Yu X."/>
            <person name="Blanchard H."/>
            <person name="von Itzstein M."/>
            <person name="Coulson B.S."/>
        </authorList>
    </citation>
    <scope>FUNCTION (OUTER CAPSID PROTEIN VP8*)</scope>
</reference>
<reference key="9">
    <citation type="journal article" date="2007" name="J. Mol. Biol.">
        <title>Insight into host cell carbohydrate-recognition by human and porcine rotavirus from crystal structures of the virion spike associated carbohydrate-binding domain (VP8*).</title>
        <authorList>
            <person name="Blanchard H."/>
            <person name="Yu X."/>
            <person name="Coulson B.S."/>
            <person name="von Itzstein M."/>
        </authorList>
    </citation>
    <scope>X-RAY CRYSTALLOGRAPHY (2.5 ANGSTROMS) OF 64-223</scope>
    <scope>FUNCTION (OUTER CAPSID PROTEIN VP8*)</scope>
</reference>
<organism>
    <name type="scientific">Rotavirus A (strain RVA/Human/United States/Wa/1974/G1P1A[8])</name>
    <name type="common">RV-A</name>
    <dbReference type="NCBI Taxonomy" id="10962"/>
    <lineage>
        <taxon>Viruses</taxon>
        <taxon>Riboviria</taxon>
        <taxon>Orthornavirae</taxon>
        <taxon>Duplornaviricota</taxon>
        <taxon>Resentoviricetes</taxon>
        <taxon>Reovirales</taxon>
        <taxon>Sedoreoviridae</taxon>
        <taxon>Rotavirus</taxon>
        <taxon>Rotavirus A</taxon>
    </lineage>
</organism>
<dbReference type="EMBL" id="M96825">
    <property type="protein sequence ID" value="AAA47290.1"/>
    <property type="molecule type" value="Genomic_RNA"/>
</dbReference>
<dbReference type="EMBL" id="L34161">
    <property type="protein sequence ID" value="AAA66953.1"/>
    <property type="molecule type" value="Genomic_RNA"/>
</dbReference>
<dbReference type="PIR" id="A28839">
    <property type="entry name" value="VPXRW3"/>
</dbReference>
<dbReference type="PDB" id="2DWR">
    <property type="method" value="X-ray"/>
    <property type="resolution" value="2.50 A"/>
    <property type="chains" value="A=65-223"/>
</dbReference>
<dbReference type="PDBsum" id="2DWR"/>
<dbReference type="SMR" id="P11193"/>
<dbReference type="UniLectin" id="P11193"/>
<dbReference type="ABCD" id="P11193">
    <property type="antibodies" value="18 sequenced antibodies"/>
</dbReference>
<dbReference type="EvolutionaryTrace" id="P11193"/>
<dbReference type="Proteomes" id="UP000006581">
    <property type="component" value="Genome"/>
</dbReference>
<dbReference type="GO" id="GO:0044172">
    <property type="term" value="C:host cell endoplasmic reticulum-Golgi intermediate compartment"/>
    <property type="evidence" value="ECO:0007669"/>
    <property type="project" value="UniProtKB-SubCell"/>
</dbReference>
<dbReference type="GO" id="GO:0020002">
    <property type="term" value="C:host cell plasma membrane"/>
    <property type="evidence" value="ECO:0007669"/>
    <property type="project" value="UniProtKB-SubCell"/>
</dbReference>
<dbReference type="GO" id="GO:0044168">
    <property type="term" value="C:host cell rough endoplasmic reticulum"/>
    <property type="evidence" value="ECO:0007669"/>
    <property type="project" value="UniProtKB-SubCell"/>
</dbReference>
<dbReference type="GO" id="GO:0044163">
    <property type="term" value="C:host cytoskeleton"/>
    <property type="evidence" value="ECO:0007669"/>
    <property type="project" value="UniProtKB-SubCell"/>
</dbReference>
<dbReference type="GO" id="GO:0016020">
    <property type="term" value="C:membrane"/>
    <property type="evidence" value="ECO:0007669"/>
    <property type="project" value="UniProtKB-KW"/>
</dbReference>
<dbReference type="GO" id="GO:0039624">
    <property type="term" value="C:viral outer capsid"/>
    <property type="evidence" value="ECO:0007669"/>
    <property type="project" value="UniProtKB-UniRule"/>
</dbReference>
<dbReference type="GO" id="GO:0039665">
    <property type="term" value="P:permeabilization of host organelle membrane involved in viral entry into host cell"/>
    <property type="evidence" value="ECO:0007669"/>
    <property type="project" value="UniProtKB-UniRule"/>
</dbReference>
<dbReference type="GO" id="GO:0019062">
    <property type="term" value="P:virion attachment to host cell"/>
    <property type="evidence" value="ECO:0007669"/>
    <property type="project" value="UniProtKB-UniRule"/>
</dbReference>
<dbReference type="FunFam" id="2.60.120.200:FF:000303">
    <property type="entry name" value="Outer capsid protein VP4"/>
    <property type="match status" value="1"/>
</dbReference>
<dbReference type="Gene3D" id="1.20.5.170">
    <property type="match status" value="1"/>
</dbReference>
<dbReference type="Gene3D" id="2.60.120.200">
    <property type="match status" value="1"/>
</dbReference>
<dbReference type="HAMAP" id="MF_04132">
    <property type="entry name" value="Rota_A_VP4"/>
    <property type="match status" value="1"/>
</dbReference>
<dbReference type="HAMAP" id="MF_04125">
    <property type="entry name" value="Rota_VP4"/>
    <property type="match status" value="1"/>
</dbReference>
<dbReference type="InterPro" id="IPR013320">
    <property type="entry name" value="ConA-like_dom_sf"/>
</dbReference>
<dbReference type="InterPro" id="IPR042546">
    <property type="entry name" value="Rota_A_VP4"/>
</dbReference>
<dbReference type="InterPro" id="IPR035330">
    <property type="entry name" value="Rota_VP4_MID"/>
</dbReference>
<dbReference type="InterPro" id="IPR038017">
    <property type="entry name" value="Rota_VP4_MID_sf"/>
</dbReference>
<dbReference type="InterPro" id="IPR000416">
    <property type="entry name" value="VP4_concanavalin-like"/>
</dbReference>
<dbReference type="InterPro" id="IPR035329">
    <property type="entry name" value="VP4_helical"/>
</dbReference>
<dbReference type="Pfam" id="PF17477">
    <property type="entry name" value="Rota_VP4_MID"/>
    <property type="match status" value="1"/>
</dbReference>
<dbReference type="Pfam" id="PF00426">
    <property type="entry name" value="VP4_haemagglut"/>
    <property type="match status" value="1"/>
</dbReference>
<dbReference type="Pfam" id="PF17478">
    <property type="entry name" value="VP4_helical"/>
    <property type="match status" value="1"/>
</dbReference>
<dbReference type="SUPFAM" id="SSF49899">
    <property type="entry name" value="Concanavalin A-like lectins/glucanases"/>
    <property type="match status" value="1"/>
</dbReference>
<dbReference type="SUPFAM" id="SSF111379">
    <property type="entry name" value="VP4 membrane interaction domain"/>
    <property type="match status" value="1"/>
</dbReference>
<organismHost>
    <name type="scientific">Homo sapiens</name>
    <name type="common">Human</name>
    <dbReference type="NCBI Taxonomy" id="9606"/>
</organismHost>
<keyword id="KW-0002">3D-structure</keyword>
<keyword id="KW-0167">Capsid protein</keyword>
<keyword id="KW-0175">Coiled coil</keyword>
<keyword id="KW-1015">Disulfide bond</keyword>
<keyword id="KW-0348">Hemagglutinin</keyword>
<keyword id="KW-1032">Host cell membrane</keyword>
<keyword id="KW-1035">Host cytoplasm</keyword>
<keyword id="KW-1037">Host cytoskeleton</keyword>
<keyword id="KW-1038">Host endoplasmic reticulum</keyword>
<keyword id="KW-1043">Host membrane</keyword>
<keyword id="KW-0945">Host-virus interaction</keyword>
<keyword id="KW-0472">Membrane</keyword>
<keyword id="KW-1152">Outer capsid protein</keyword>
<keyword id="KW-1161">Viral attachment to host cell</keyword>
<keyword id="KW-1162">Viral penetration into host cytoplasm</keyword>
<keyword id="KW-1173">Viral penetration via permeabilization of host membrane</keyword>
<keyword id="KW-0946">Virion</keyword>
<keyword id="KW-1160">Virus entry into host cell</keyword>
<comment type="function">
    <molecule>Outer capsid protein VP4</molecule>
    <text evidence="1">Spike-forming protein that mediates virion attachment to the host epithelial cell receptors and plays a major role in cell penetration, determination of host range restriction and virulence. Rotavirus attachment and entry into the host cell probably involves multiple sequential contacts between the outer capsid proteins VP4 and VP7, and the cell receptors. It is subsequently lost, together with VP7, following virus entry into the host cell. Following entry into the host cell, low intracellular or intravesicular Ca(2+) concentration probably causes the calcium-stabilized VP7 trimers to dissociate from the virion. This step is probably necessary for the membrane-disrupting entry step and the release of VP4, which is locked onto the virion by VP7. During the virus exit from the host cell, VP4 seems to be required to target the newly formed virions to the host cell lipid rafts.</text>
</comment>
<comment type="function">
    <molecule>Outer capsid protein VP5*</molecule>
    <text evidence="1">Forms the spike 'foot' and 'body' and acts as a membrane permeabilization protein that mediates release of viral particles from endosomal compartments into the cytoplasm. During entry, the part of VP5* that protrudes from the virus folds back on itself and reorganizes from a local dimer to a trimer. This reorganization may be linked to membrane penetration by exposing VP5* hydrophobic region. In integrin-dependent strains, VP5* targets the integrin heterodimer ITGA2/ITGB1 for cell attachment.</text>
</comment>
<comment type="function">
    <text evidence="1 4 5">VP8* Forms the head of the spikes and mediates the recognition of specific host cell surface glycans (PubMed:17306299). It is the viral hemagglutinin and an important target of neutralizing antibodies (By similarity). In sialic acid-dependent strains, VP8* binds to host cell sialic acid, most probably a ganglioside, providing the initial contact (PubMed:24501414). In some other strains, VP8* mediates the attachment to histo-blood group antigens (HBGAs) for viral entry (By similarity).</text>
</comment>
<comment type="subunit">
    <molecule>Outer capsid protein VP4</molecule>
    <text evidence="1">Homotrimer. VP4 adopts a dimeric appearance above the capsid surface, while forming a trimeric base anchored inside the capsid layer. Only hints of the third molecule are observed above the capsid surface. It probably performs a series of molecular rearrangements during viral entry. Prior to trypsin cleavage, it is flexible. The priming trypsin cleavage triggers its rearrangement into rigid spikes with approximate two-fold symmetry of their protruding parts. After an unknown second triggering event, cleaved VP4 may undergo another rearrangement, in which two VP5* subunits fold back on themselves and join a third subunit to form a tightly associated trimer, shaped like a folded umbrella. Interacts with VP6. Interacts with VP7.</text>
</comment>
<comment type="subunit">
    <molecule>Outer capsid protein VP5*</molecule>
    <text evidence="1 2 3">Homotrimer. The trimer is coiled-coil stabilized by its C-terminus, however, its N-terminus, known as antigen domain or 'body', seems to be flexible allowing it to self-associate either as a dimer or a trimer (By similarity). Interacts with host ITGA2 (via ITAG2 I-domain); this interaction occurs when ITGA2 is part of the integrin heterodimer ITGA2/ITGB1 (PubMed:16603530). Interacts with host integrin heterodimer ITGA4/ITGB1 and ITGA4/ITGB7 (PubMed:16298987).</text>
</comment>
<comment type="subcellular location">
    <molecule>Outer capsid protein VP4</molecule>
    <subcellularLocation>
        <location evidence="1">Virion</location>
    </subcellularLocation>
    <subcellularLocation>
        <location evidence="1">Host rough endoplasmic reticulum</location>
    </subcellularLocation>
    <subcellularLocation>
        <location evidence="1">Host cell membrane</location>
    </subcellularLocation>
    <subcellularLocation>
        <location evidence="1">Host cytoplasm</location>
        <location evidence="1">Host cytoskeleton</location>
    </subcellularLocation>
    <subcellularLocation>
        <location evidence="1">Host endoplasmic reticulum-Golgi intermediate compartment</location>
    </subcellularLocation>
    <text evidence="1">The outer layer contains 180 copies of VP4, grouped as 60 dimers. Immature double-layered particles assembled in the cytoplasm bud across the membrane of the endoplasmic reticulum, acquiring during this process a transient lipid membrane that is modified with the ER resident viral glycoproteins NSP4 and VP7; these enveloped particles also contain VP4. As the particles move towards the interior of the ER cisternae, the transient lipid membrane and the non-structural protein NSP4 are lost, while the virus surface proteins VP4 and VP7 rearrange to form the outermost virus protein layer, yielding mature infectious triple-layered particles. VP4 also seems to associate with lipid rafts of the host cell membrane probably for the exit of the virus from the infected cell by an alternate pathway.</text>
</comment>
<comment type="subcellular location">
    <molecule>Outer capsid protein VP8*</molecule>
    <subcellularLocation>
        <location evidence="1">Virion</location>
    </subcellularLocation>
    <text evidence="1">Outer capsid protein.</text>
</comment>
<comment type="subcellular location">
    <molecule>Outer capsid protein VP5*</molecule>
    <subcellularLocation>
        <location evidence="1">Virion</location>
    </subcellularLocation>
    <text evidence="1">Outer capsid protein.</text>
</comment>
<comment type="domain">
    <molecule>Outer capsid protein VP4</molecule>
    <text evidence="1">The VP4 spike is divided into a foot, a stalk and body, and a head.</text>
</comment>
<comment type="PTM">
    <molecule>Outer capsid protein VP4</molecule>
    <text evidence="1">Proteolytic cleavage by trypsin results in activation of VP4 functions and greatly increases infectivity. The penetration into the host cell is dependent on trypsin treatment of VP4. It produces two peptides, VP5* and VP8* that remain associated with the virion. Cleavage of VP4 by trypsin probably occurs in vivo in the lumen of the intestine prior to infection of enterocytes. Trypsin seems to be incorporated into the three-layered viral particles but remains inactive as long as the viral outer capsid is intact and would only be activated upon the solubilization of the latter.</text>
</comment>
<comment type="miscellaneous">
    <text evidence="6">This strain probably does not use sialic acid to attach to the host cell.</text>
</comment>
<comment type="miscellaneous">
    <text evidence="1">In group A rotaviruses, VP4 defines the P serotype.</text>
</comment>
<comment type="miscellaneous">
    <text evidence="1">Some rotavirus strains are neuraminidase-sensitive and require sialic acid to attach to the cell surface. Some rotavirus strains are integrin-dependent. Some rotavirus strains depend on ganglioside for their entry into the host cell. Hsp70 also seems to be involved in the entry of some strains.</text>
</comment>
<comment type="similarity">
    <text evidence="1">Belongs to the rotavirus VP4 family.</text>
</comment>
<evidence type="ECO:0000255" key="1">
    <source>
        <dbReference type="HAMAP-Rule" id="MF_04132"/>
    </source>
</evidence>
<evidence type="ECO:0000269" key="2">
    <source>
    </source>
</evidence>
<evidence type="ECO:0000269" key="3">
    <source>
    </source>
</evidence>
<evidence type="ECO:0000269" key="4">
    <source>
    </source>
</evidence>
<evidence type="ECO:0000269" key="5">
    <source>
    </source>
</evidence>
<evidence type="ECO:0000303" key="6">
    <source>
    </source>
</evidence>
<evidence type="ECO:0000305" key="7"/>
<evidence type="ECO:0007829" key="8">
    <source>
        <dbReference type="PDB" id="2DWR"/>
    </source>
</evidence>
<name>VP4_ROTHW</name>
<proteinExistence type="evidence at protein level"/>
<protein>
    <recommendedName>
        <fullName evidence="1">Outer capsid protein VP4</fullName>
    </recommendedName>
    <alternativeName>
        <fullName evidence="1">Hemagglutinin</fullName>
    </alternativeName>
    <component>
        <recommendedName>
            <fullName evidence="1">Outer capsid protein VP8*</fullName>
        </recommendedName>
    </component>
    <component>
        <recommendedName>
            <fullName evidence="1">Outer capsid protein VP5*</fullName>
        </recommendedName>
    </component>
</protein>
<sequence length="775" mass="87697">MASLIYRQLLTNSYSVDLHDEIEQIGSEKTQNVTINPSPFAQTRYAPVNWGHGEINDSTTVEPILDGPYQPTTFTPPNDYWILINSNTNGVVYESTNNSDFWTAVVAIEPHVNPVDRQYTIFGESKQFNVSNDSNKWKFLEMFRSSSQNEFYNRRTLTSDTRFVGILKYGGRVWTFHGETPRATTDSSSTANLNNISITIHSEFYIIPRSQESKCNEYINNGLPPIQNTRNVVPLPLSSRSIQYKRAQVNEDIIVSKTSLWKEMQYNRDIIIRFKFGNSIVKMGGLGYKWSEISYKAANYQYNYLRDGEQVTAHTTCSVNGVNNFSYNGGSLPTDFGISRYEVIKENSYVYVDYWDDSKAFRNMVYVRSLAANLNSVKCTGGSYNFSIPVGAWPVMNGGAVSLHFAGVTLSTQFTDFVSLNSLRFRFSLTVDEPPFSILRTRTVNLYGLPAANPNNGNEYYEISGRFSLIYLVPTNDDYQTPIMNSVTVRQDLERQLTDLREEFNSLSQEIAMAQLIDLALLPLDMFSMFSGIKSTIDLTKSMATSVMKKFRKSKLATSISEMTNSLSDAASSASRNVSIRSNLSAISNWTNVSNDVSNVTNSLNDISTQTSTISKKFRLKEMITQTEGMSFDDISAAVLKTKIDMSTQIGKNTLPDIVTEASEKFIPKRSYRILKDDEVMEINTEGKFFAYKINTFDEVPFDVNKFAELVTDSPVISAIIDFKTLKNLNDNYGITRTEALNLIKSNPNMLRNFINQNNPIIRNRIEQLILQCKL</sequence>
<feature type="chain" id="PRO_0000041090" description="Outer capsid protein VP4" evidence="1">
    <location>
        <begin position="1"/>
        <end position="775"/>
    </location>
</feature>
<feature type="chain" id="PRO_0000041091" description="Outer capsid protein VP8*" evidence="1">
    <location>
        <begin position="1"/>
        <end position="230"/>
    </location>
</feature>
<feature type="chain" id="PRO_0000041092" description="Outer capsid protein VP5*" evidence="1">
    <location>
        <begin position="247"/>
        <end position="775"/>
    </location>
</feature>
<feature type="region of interest" description="Spike head" evidence="1">
    <location>
        <begin position="65"/>
        <end position="223"/>
    </location>
</feature>
<feature type="region of interest" description="Antigen domain">
    <location>
        <begin position="247"/>
        <end position="479"/>
    </location>
</feature>
<feature type="region of interest" description="Spike body and stalk (antigen domain)" evidence="1">
    <location>
        <begin position="247"/>
        <end position="478"/>
    </location>
</feature>
<feature type="region of interest" description="DGE motif; interaction with ITGA2/ITGB1 heterodimer" evidence="3">
    <location>
        <begin position="307"/>
        <end position="309"/>
    </location>
</feature>
<feature type="region of interest" description="Hydrophobic; possible role in virus entry into host cell" evidence="1">
    <location>
        <begin position="388"/>
        <end position="408"/>
    </location>
</feature>
<feature type="region of interest" description="Spike foot" evidence="1">
    <location>
        <begin position="509"/>
        <end position="775"/>
    </location>
</feature>
<feature type="coiled-coil region" evidence="1">
    <location>
        <begin position="483"/>
        <end position="517"/>
    </location>
</feature>
<feature type="short sequence motif" description="DGE motif; interaction with ITGA2/ITGB1 heterodimer" evidence="1">
    <location>
        <begin position="307"/>
        <end position="309"/>
    </location>
</feature>
<feature type="short sequence motif" description="YGL motif; interaction with ITGA4" evidence="1">
    <location>
        <begin position="447"/>
        <end position="449"/>
    </location>
</feature>
<feature type="short sequence motif" description="KID motif; interaction with HSPA8" evidence="1">
    <location>
        <begin position="643"/>
        <end position="645"/>
    </location>
</feature>
<feature type="site" description="Cleavage" evidence="1">
    <location>
        <begin position="230"/>
        <end position="231"/>
    </location>
</feature>
<feature type="site" description="Cleavage" evidence="1">
    <location>
        <begin position="240"/>
        <end position="241"/>
    </location>
</feature>
<feature type="site" description="Cleavage; associated with enhancement of infectivity" evidence="1">
    <location>
        <begin position="246"/>
        <end position="247"/>
    </location>
</feature>
<feature type="disulfide bond" evidence="1">
    <location>
        <begin position="317"/>
        <end position="379"/>
    </location>
</feature>
<feature type="sequence conflict" description="In Ref. 3; AAA66953." evidence="7" ref="3">
    <original>I</original>
    <variation>M</variation>
    <location>
        <position position="64"/>
    </location>
</feature>
<feature type="sequence conflict" description="In Ref. 4." evidence="7" ref="4">
    <original>D</original>
    <variation>E</variation>
    <location>
        <position position="100"/>
    </location>
</feature>
<feature type="sequence conflict" description="In Ref. 1." evidence="7" ref="1">
    <original>T</original>
    <variation>L</variation>
    <location>
        <position position="120"/>
    </location>
</feature>
<feature type="sequence conflict" description="In Ref. 4." evidence="7" ref="4">
    <original>Q</original>
    <variation>E</variation>
    <location>
        <position position="265"/>
    </location>
</feature>
<feature type="sequence conflict" description="In Ref. 3; AAA66953." evidence="7" ref="3">
    <original>S</original>
    <variation>F</variation>
    <location>
        <position position="331"/>
    </location>
</feature>
<feature type="sequence conflict" description="In Ref. 2; AAA47290." evidence="7" ref="2">
    <original>I</original>
    <variation>L</variation>
    <location>
        <position position="388"/>
    </location>
</feature>
<feature type="sequence conflict" description="In Ref. 2; AAA47290." evidence="7" ref="2">
    <original>D</original>
    <variation>G</variation>
    <location>
        <position position="525"/>
    </location>
</feature>
<feature type="sequence conflict" description="In Ref. 1." evidence="7" ref="1">
    <original>F</original>
    <variation>L</variation>
    <location>
        <position position="618"/>
    </location>
</feature>
<feature type="sequence conflict" description="In Ref. 1." evidence="7" ref="1">
    <original>N</original>
    <variation>K</variation>
    <location>
        <position position="749"/>
    </location>
</feature>
<feature type="sequence conflict" description="In Ref. 1." evidence="7" ref="1">
    <original>N</original>
    <variation>H</variation>
    <location>
        <position position="759"/>
    </location>
</feature>
<feature type="sequence conflict" description="In Ref. 1." evidence="7" ref="1">
    <original>K</original>
    <variation>R</variation>
    <location>
        <position position="774"/>
    </location>
</feature>
<feature type="strand" evidence="8">
    <location>
        <begin position="66"/>
        <end position="69"/>
    </location>
</feature>
<feature type="strand" evidence="8">
    <location>
        <begin position="71"/>
        <end position="74"/>
    </location>
</feature>
<feature type="strand" evidence="8">
    <location>
        <begin position="80"/>
        <end position="85"/>
    </location>
</feature>
<feature type="strand" evidence="8">
    <location>
        <begin position="88"/>
        <end position="96"/>
    </location>
</feature>
<feature type="strand" evidence="8">
    <location>
        <begin position="98"/>
        <end position="100"/>
    </location>
</feature>
<feature type="strand" evidence="8">
    <location>
        <begin position="102"/>
        <end position="108"/>
    </location>
</feature>
<feature type="strand" evidence="8">
    <location>
        <begin position="110"/>
        <end position="121"/>
    </location>
</feature>
<feature type="strand" evidence="8">
    <location>
        <begin position="124"/>
        <end position="132"/>
    </location>
</feature>
<feature type="strand" evidence="8">
    <location>
        <begin position="134"/>
        <end position="146"/>
    </location>
</feature>
<feature type="strand" evidence="8">
    <location>
        <begin position="152"/>
        <end position="161"/>
    </location>
</feature>
<feature type="strand" evidence="8">
    <location>
        <begin position="163"/>
        <end position="169"/>
    </location>
</feature>
<feature type="strand" evidence="8">
    <location>
        <begin position="172"/>
        <end position="179"/>
    </location>
</feature>
<feature type="strand" evidence="8">
    <location>
        <begin position="184"/>
        <end position="189"/>
    </location>
</feature>
<feature type="strand" evidence="8">
    <location>
        <begin position="197"/>
        <end position="200"/>
    </location>
</feature>
<feature type="strand" evidence="8">
    <location>
        <begin position="204"/>
        <end position="208"/>
    </location>
</feature>
<feature type="helix" evidence="8">
    <location>
        <begin position="209"/>
        <end position="211"/>
    </location>
</feature>
<feature type="helix" evidence="8">
    <location>
        <begin position="212"/>
        <end position="221"/>
    </location>
</feature>